<accession>A4Y6S7</accession>
<organism>
    <name type="scientific">Shewanella putrefaciens (strain CN-32 / ATCC BAA-453)</name>
    <dbReference type="NCBI Taxonomy" id="319224"/>
    <lineage>
        <taxon>Bacteria</taxon>
        <taxon>Pseudomonadati</taxon>
        <taxon>Pseudomonadota</taxon>
        <taxon>Gammaproteobacteria</taxon>
        <taxon>Alteromonadales</taxon>
        <taxon>Shewanellaceae</taxon>
        <taxon>Shewanella</taxon>
    </lineage>
</organism>
<gene>
    <name evidence="1" type="primary">ruvC</name>
    <name type="ordered locus">Sputcn32_1937</name>
</gene>
<name>RUVC_SHEPC</name>
<proteinExistence type="inferred from homology"/>
<evidence type="ECO:0000255" key="1">
    <source>
        <dbReference type="HAMAP-Rule" id="MF_00034"/>
    </source>
</evidence>
<keyword id="KW-0963">Cytoplasm</keyword>
<keyword id="KW-0227">DNA damage</keyword>
<keyword id="KW-0233">DNA recombination</keyword>
<keyword id="KW-0234">DNA repair</keyword>
<keyword id="KW-0238">DNA-binding</keyword>
<keyword id="KW-0255">Endonuclease</keyword>
<keyword id="KW-0378">Hydrolase</keyword>
<keyword id="KW-0460">Magnesium</keyword>
<keyword id="KW-0479">Metal-binding</keyword>
<keyword id="KW-0540">Nuclease</keyword>
<comment type="function">
    <text evidence="1">The RuvA-RuvB-RuvC complex processes Holliday junction (HJ) DNA during genetic recombination and DNA repair. Endonuclease that resolves HJ intermediates. Cleaves cruciform DNA by making single-stranded nicks across the HJ at symmetrical positions within the homologous arms, yielding a 5'-phosphate and a 3'-hydroxyl group; requires a central core of homology in the junction. The consensus cleavage sequence is 5'-(A/T)TT(C/G)-3'. Cleavage occurs on the 3'-side of the TT dinucleotide at the point of strand exchange. HJ branch migration catalyzed by RuvA-RuvB allows RuvC to scan DNA until it finds its consensus sequence, where it cleaves and resolves the cruciform DNA.</text>
</comment>
<comment type="catalytic activity">
    <reaction evidence="1">
        <text>Endonucleolytic cleavage at a junction such as a reciprocal single-stranded crossover between two homologous DNA duplexes (Holliday junction).</text>
        <dbReference type="EC" id="3.1.21.10"/>
    </reaction>
</comment>
<comment type="cofactor">
    <cofactor evidence="1">
        <name>Mg(2+)</name>
        <dbReference type="ChEBI" id="CHEBI:18420"/>
    </cofactor>
    <text evidence="1">Binds 2 Mg(2+) ion per subunit.</text>
</comment>
<comment type="subunit">
    <text evidence="1">Homodimer which binds Holliday junction (HJ) DNA. The HJ becomes 2-fold symmetrical on binding to RuvC with unstacked arms; it has a different conformation from HJ DNA in complex with RuvA. In the full resolvosome a probable DNA-RuvA(4)-RuvB(12)-RuvC(2) complex forms which resolves the HJ.</text>
</comment>
<comment type="subcellular location">
    <subcellularLocation>
        <location evidence="1">Cytoplasm</location>
    </subcellularLocation>
</comment>
<comment type="similarity">
    <text evidence="1">Belongs to the RuvC family.</text>
</comment>
<sequence>MAIILGVDPGSRITGYGVIQCQGRHQIYLGSGCIRTSSEELSGRLKQIFDGITEIIRQYQPDEFAIERVFMAKNADSALKLGQARGAAIVAATVANLPVAEYSATQIKSAVVGTGRAKKEQIQHMIQQLLKLPAAPQADAADALGVAVCHYHTRQSLIALSGRATARTYGRYR</sequence>
<dbReference type="EC" id="3.1.21.10" evidence="1"/>
<dbReference type="EMBL" id="CP000681">
    <property type="protein sequence ID" value="ABP75660.1"/>
    <property type="molecule type" value="Genomic_DNA"/>
</dbReference>
<dbReference type="SMR" id="A4Y6S7"/>
<dbReference type="STRING" id="319224.Sputcn32_1937"/>
<dbReference type="KEGG" id="spc:Sputcn32_1937"/>
<dbReference type="eggNOG" id="COG0817">
    <property type="taxonomic scope" value="Bacteria"/>
</dbReference>
<dbReference type="HOGENOM" id="CLU_091257_2_1_6"/>
<dbReference type="GO" id="GO:0005737">
    <property type="term" value="C:cytoplasm"/>
    <property type="evidence" value="ECO:0007669"/>
    <property type="project" value="UniProtKB-SubCell"/>
</dbReference>
<dbReference type="GO" id="GO:0048476">
    <property type="term" value="C:Holliday junction resolvase complex"/>
    <property type="evidence" value="ECO:0007669"/>
    <property type="project" value="UniProtKB-UniRule"/>
</dbReference>
<dbReference type="GO" id="GO:0008821">
    <property type="term" value="F:crossover junction DNA endonuclease activity"/>
    <property type="evidence" value="ECO:0007669"/>
    <property type="project" value="UniProtKB-UniRule"/>
</dbReference>
<dbReference type="GO" id="GO:0003677">
    <property type="term" value="F:DNA binding"/>
    <property type="evidence" value="ECO:0007669"/>
    <property type="project" value="UniProtKB-KW"/>
</dbReference>
<dbReference type="GO" id="GO:0000287">
    <property type="term" value="F:magnesium ion binding"/>
    <property type="evidence" value="ECO:0007669"/>
    <property type="project" value="UniProtKB-UniRule"/>
</dbReference>
<dbReference type="GO" id="GO:0006310">
    <property type="term" value="P:DNA recombination"/>
    <property type="evidence" value="ECO:0007669"/>
    <property type="project" value="UniProtKB-UniRule"/>
</dbReference>
<dbReference type="GO" id="GO:0006281">
    <property type="term" value="P:DNA repair"/>
    <property type="evidence" value="ECO:0007669"/>
    <property type="project" value="UniProtKB-UniRule"/>
</dbReference>
<dbReference type="CDD" id="cd16962">
    <property type="entry name" value="RuvC"/>
    <property type="match status" value="1"/>
</dbReference>
<dbReference type="FunFam" id="3.30.420.10:FF:000002">
    <property type="entry name" value="Crossover junction endodeoxyribonuclease RuvC"/>
    <property type="match status" value="1"/>
</dbReference>
<dbReference type="Gene3D" id="3.30.420.10">
    <property type="entry name" value="Ribonuclease H-like superfamily/Ribonuclease H"/>
    <property type="match status" value="1"/>
</dbReference>
<dbReference type="HAMAP" id="MF_00034">
    <property type="entry name" value="RuvC"/>
    <property type="match status" value="1"/>
</dbReference>
<dbReference type="InterPro" id="IPR012337">
    <property type="entry name" value="RNaseH-like_sf"/>
</dbReference>
<dbReference type="InterPro" id="IPR036397">
    <property type="entry name" value="RNaseH_sf"/>
</dbReference>
<dbReference type="InterPro" id="IPR020563">
    <property type="entry name" value="X-over_junc_endoDNase_Mg_BS"/>
</dbReference>
<dbReference type="InterPro" id="IPR002176">
    <property type="entry name" value="X-over_junc_endoDNase_RuvC"/>
</dbReference>
<dbReference type="NCBIfam" id="NF000711">
    <property type="entry name" value="PRK00039.2-1"/>
    <property type="match status" value="1"/>
</dbReference>
<dbReference type="NCBIfam" id="TIGR00228">
    <property type="entry name" value="ruvC"/>
    <property type="match status" value="1"/>
</dbReference>
<dbReference type="PANTHER" id="PTHR30194">
    <property type="entry name" value="CROSSOVER JUNCTION ENDODEOXYRIBONUCLEASE RUVC"/>
    <property type="match status" value="1"/>
</dbReference>
<dbReference type="PANTHER" id="PTHR30194:SF3">
    <property type="entry name" value="CROSSOVER JUNCTION ENDODEOXYRIBONUCLEASE RUVC"/>
    <property type="match status" value="1"/>
</dbReference>
<dbReference type="Pfam" id="PF02075">
    <property type="entry name" value="RuvC"/>
    <property type="match status" value="1"/>
</dbReference>
<dbReference type="PRINTS" id="PR00696">
    <property type="entry name" value="RSOLVASERUVC"/>
</dbReference>
<dbReference type="SUPFAM" id="SSF53098">
    <property type="entry name" value="Ribonuclease H-like"/>
    <property type="match status" value="1"/>
</dbReference>
<dbReference type="PROSITE" id="PS01321">
    <property type="entry name" value="RUVC"/>
    <property type="match status" value="1"/>
</dbReference>
<feature type="chain" id="PRO_1000002831" description="Crossover junction endodeoxyribonuclease RuvC">
    <location>
        <begin position="1"/>
        <end position="173"/>
    </location>
</feature>
<feature type="active site" evidence="1">
    <location>
        <position position="8"/>
    </location>
</feature>
<feature type="active site" evidence="1">
    <location>
        <position position="67"/>
    </location>
</feature>
<feature type="active site" evidence="1">
    <location>
        <position position="139"/>
    </location>
</feature>
<feature type="binding site" evidence="1">
    <location>
        <position position="8"/>
    </location>
    <ligand>
        <name>Mg(2+)</name>
        <dbReference type="ChEBI" id="CHEBI:18420"/>
        <label>1</label>
    </ligand>
</feature>
<feature type="binding site" evidence="1">
    <location>
        <position position="67"/>
    </location>
    <ligand>
        <name>Mg(2+)</name>
        <dbReference type="ChEBI" id="CHEBI:18420"/>
        <label>2</label>
    </ligand>
</feature>
<feature type="binding site" evidence="1">
    <location>
        <position position="139"/>
    </location>
    <ligand>
        <name>Mg(2+)</name>
        <dbReference type="ChEBI" id="CHEBI:18420"/>
        <label>1</label>
    </ligand>
</feature>
<reference key="1">
    <citation type="submission" date="2007-04" db="EMBL/GenBank/DDBJ databases">
        <title>Complete sequence of Shewanella putrefaciens CN-32.</title>
        <authorList>
            <consortium name="US DOE Joint Genome Institute"/>
            <person name="Copeland A."/>
            <person name="Lucas S."/>
            <person name="Lapidus A."/>
            <person name="Barry K."/>
            <person name="Detter J.C."/>
            <person name="Glavina del Rio T."/>
            <person name="Hammon N."/>
            <person name="Israni S."/>
            <person name="Dalin E."/>
            <person name="Tice H."/>
            <person name="Pitluck S."/>
            <person name="Chain P."/>
            <person name="Malfatti S."/>
            <person name="Shin M."/>
            <person name="Vergez L."/>
            <person name="Schmutz J."/>
            <person name="Larimer F."/>
            <person name="Land M."/>
            <person name="Hauser L."/>
            <person name="Kyrpides N."/>
            <person name="Mikhailova N."/>
            <person name="Romine M.F."/>
            <person name="Fredrickson J."/>
            <person name="Tiedje J."/>
            <person name="Richardson P."/>
        </authorList>
    </citation>
    <scope>NUCLEOTIDE SEQUENCE [LARGE SCALE GENOMIC DNA]</scope>
    <source>
        <strain>CN-32 / ATCC BAA-453</strain>
    </source>
</reference>
<protein>
    <recommendedName>
        <fullName evidence="1">Crossover junction endodeoxyribonuclease RuvC</fullName>
        <ecNumber evidence="1">3.1.21.10</ecNumber>
    </recommendedName>
    <alternativeName>
        <fullName evidence="1">Holliday junction nuclease RuvC</fullName>
    </alternativeName>
    <alternativeName>
        <fullName evidence="1">Holliday junction resolvase RuvC</fullName>
    </alternativeName>
</protein>